<keyword id="KW-0025">Alternative splicing</keyword>
<keyword id="KW-0150">Chloroplast</keyword>
<keyword id="KW-0456">Lyase</keyword>
<keyword id="KW-0460">Magnesium</keyword>
<keyword id="KW-0464">Manganese</keyword>
<keyword id="KW-0479">Metal-binding</keyword>
<keyword id="KW-0934">Plastid</keyword>
<keyword id="KW-0809">Transit peptide</keyword>
<evidence type="ECO:0000250" key="1">
    <source>
        <dbReference type="UniProtKB" id="A0A0M3Q1Q3"/>
    </source>
</evidence>
<evidence type="ECO:0000250" key="2">
    <source>
        <dbReference type="UniProtKB" id="A0A1C9J6A7"/>
    </source>
</evidence>
<evidence type="ECO:0000250" key="3">
    <source>
        <dbReference type="UniProtKB" id="E2E2P0"/>
    </source>
</evidence>
<evidence type="ECO:0000250" key="4">
    <source>
        <dbReference type="UniProtKB" id="Q9X839"/>
    </source>
</evidence>
<evidence type="ECO:0000255" key="5"/>
<evidence type="ECO:0000269" key="6">
    <source>
    </source>
</evidence>
<evidence type="ECO:0000303" key="7">
    <source>
    </source>
</evidence>
<evidence type="ECO:0000303" key="8">
    <source>
    </source>
</evidence>
<evidence type="ECO:0000303" key="9">
    <source>
    </source>
</evidence>
<evidence type="ECO:0000303" key="10">
    <source>
    </source>
</evidence>
<evidence type="ECO:0000303" key="11">
    <source>
    </source>
</evidence>
<evidence type="ECO:0000303" key="12">
    <source>
    </source>
</evidence>
<evidence type="ECO:0000303" key="13">
    <source>
    </source>
</evidence>
<evidence type="ECO:0000303" key="14">
    <source>
    </source>
</evidence>
<evidence type="ECO:0000303" key="15">
    <source>
    </source>
</evidence>
<evidence type="ECO:0000305" key="16"/>
<name>GTPSB_THYCA</name>
<protein>
    <recommendedName>
        <fullName evidence="7">Gamma-terpinene synthase, chloroplastic</fullName>
        <ecNumber evidence="6">4.2.3.114</ecNumber>
    </recommendedName>
    <alternativeName>
        <fullName evidence="7">Terpene synthase 2</fullName>
        <shortName evidence="7">TcTPS2</shortName>
    </alternativeName>
</protein>
<reference key="1">
    <citation type="journal article" date="2013" name="Planta">
        <title>Genomic characterization, molecular cloning and expression analysis of two terpene synthases from Thymus caespititius (Lamiaceae).</title>
        <authorList>
            <person name="Lima A.S."/>
            <person name="Schimmel J."/>
            <person name="Lukas B."/>
            <person name="Novak J."/>
            <person name="Barroso J.G."/>
            <person name="Figueiredo A.C."/>
            <person name="Pedro L.G."/>
            <person name="Degenhardt J."/>
            <person name="Trindade H."/>
        </authorList>
    </citation>
    <scope>NUCLEOTIDE SEQUENCE [GENOMIC DNA / MRNA] (ISOFORMS 1 AND 2)</scope>
    <scope>FUNCTION</scope>
    <scope>CATALYTIC ACTIVITY</scope>
    <scope>PATHWAY</scope>
    <source>
        <strain>cv. 319</strain>
        <strain>cv. B1</strain>
        <tissue>Flower</tissue>
    </source>
</reference>
<reference key="2">
    <citation type="journal article" date="2015" name="Crit. Rev. Food Sci. Nutr.">
        <title>The bioactivity and toxicological actions of carvacrol.</title>
        <authorList>
            <person name="Suntres Z.E."/>
            <person name="Coccimiglio J."/>
            <person name="Alipour M."/>
        </authorList>
    </citation>
    <scope>REVIEW ON CARVACROL</scope>
    <scope>BIOTECHNOLOGY</scope>
</reference>
<reference key="3">
    <citation type="journal article" date="2018" name="Phytother. Res.">
        <title>Thymol, thyme, and other plant sources: Health and potential uses.</title>
        <authorList>
            <person name="Salehi B."/>
            <person name="Mishra A.P."/>
            <person name="Shukla I."/>
            <person name="Sharifi-Rad M."/>
            <person name="Contreras M.D.M."/>
            <person name="Segura-Carretero A."/>
            <person name="Fathi H."/>
            <person name="Nasrabadi N.N."/>
            <person name="Kobarfard F."/>
            <person name="Sharifi-Rad J."/>
        </authorList>
    </citation>
    <scope>REVIEW ON THYMOL</scope>
    <scope>BIOTECHNOLOGY</scope>
</reference>
<reference key="4">
    <citation type="journal article" date="2019" name="Nat. Prod. Res.">
        <title>Synthesis and antifungal activity of carvacrol and thymol esters with heteroaromatic carboxylic acids.</title>
        <authorList>
            <person name="Wang K."/>
            <person name="Jiang S."/>
            <person name="Yang Y."/>
            <person name="Fan L."/>
            <person name="Su F."/>
            <person name="Ye M."/>
        </authorList>
    </citation>
    <scope>REVIEW ON CARVACROL AND THYMOL</scope>
    <scope>BIOTECHNOLOGY</scope>
</reference>
<reference key="5">
    <citation type="journal article" date="2020" name="Front. Plant Sci.">
        <title>Carvacrol, a plant metabolite targeting viral protease (Mpro) and ACE2 in host cells can be a possible candidate for COVID-19.</title>
        <authorList>
            <person name="Javed H."/>
            <person name="Meeran M.F.N."/>
            <person name="Jha N.K."/>
            <person name="Ojha S."/>
        </authorList>
    </citation>
    <scope>REVIEW ON CARVACROL EFFECTS ON COVID-19</scope>
    <scope>BIOTECHNOLOGY</scope>
</reference>
<reference key="6">
    <citation type="journal article" date="2020" name="J. Biomol. Struct. Dyn.">
        <title>Identification of phytochemical inhibitors against main protease of COVID-19 using molecular modeling approaches.</title>
        <authorList>
            <person name="Kumar A."/>
            <person name="Choudhir G."/>
            <person name="Shukla S.K."/>
            <person name="Sharma M."/>
            <person name="Tyagi P."/>
            <person name="Bhushan A."/>
            <person name="Rathore M."/>
        </authorList>
    </citation>
    <scope>REVIEW ON CARVACROL EFFECTS ON COVID-19</scope>
    <scope>BIOTECHNOLOGY</scope>
</reference>
<reference key="7">
    <citation type="journal article" date="2020" name="J. Biomol. Struct. Dyn.">
        <title>Synthesis, anticholinesterase activity and molecular modeling studies of novel carvacrol-substituted amide derivatives.</title>
        <authorList>
            <person name="Zengin Kurt B."/>
            <person name="Durdagi S."/>
            <person name="Celebi G."/>
            <person name="Ekhteiari Salmas R."/>
            <person name="Sonmez F."/>
        </authorList>
    </citation>
    <scope>REVIEW ON CARVACROL DERIVATIVES</scope>
    <scope>BIOTECHNOLOGY</scope>
</reference>
<reference key="8">
    <citation type="journal article" date="2020" name="J. Mol. Struct.">
        <title>Computational evaluation of major components from plant essential oils as potent inhibitors of SARS-CoV-2 spike protein.</title>
        <authorList>
            <person name="Kulkarni S.A."/>
            <person name="Nagarajan S.K."/>
            <person name="Ramesh V."/>
            <person name="Palaniyandi V."/>
            <person name="Selvam S.P."/>
            <person name="Madhavan T."/>
        </authorList>
    </citation>
    <scope>REVIEW ON PLANT ESSENTIAL OILS EFFECTS ON COVID-19</scope>
    <scope>BIOTECHNOLOGY</scope>
</reference>
<reference key="9">
    <citation type="journal article" date="2021" name="Front. Chem.">
        <title>Antiviral essential oil components against SARS-CoV-2 in pre-procedural mouth rinses for dental settings during COVID-19: A computational study.</title>
        <authorList>
            <person name="Yadalam P.K."/>
            <person name="Varatharajan K."/>
            <person name="Rajapandian K."/>
            <person name="Chopra P."/>
            <person name="Arumuganainar D."/>
            <person name="Nagarathnam T."/>
            <person name="Sohn H."/>
            <person name="Madhavan T."/>
        </authorList>
    </citation>
    <scope>REVIEW ON PLANT ESSENTIAL OILS EFFECTS ON COVID-19</scope>
    <scope>BIOTECHNOLOGY</scope>
</reference>
<dbReference type="EC" id="4.2.3.114" evidence="6"/>
<dbReference type="EMBL" id="KC181098">
    <property type="protein sequence ID" value="AGK88253.1"/>
    <property type="molecule type" value="Genomic_DNA"/>
</dbReference>
<dbReference type="EMBL" id="KC181099">
    <property type="protein sequence ID" value="AGK88254.1"/>
    <property type="molecule type" value="mRNA"/>
</dbReference>
<dbReference type="EMBL" id="KC181103">
    <property type="protein sequence ID" value="AGK88258.1"/>
    <property type="molecule type" value="mRNA"/>
</dbReference>
<dbReference type="SMR" id="R4JGL8"/>
<dbReference type="BRENDA" id="4.2.3.114">
    <property type="organism ID" value="13955"/>
</dbReference>
<dbReference type="UniPathway" id="UPA00213"/>
<dbReference type="GO" id="GO:0009507">
    <property type="term" value="C:chloroplast"/>
    <property type="evidence" value="ECO:0007669"/>
    <property type="project" value="UniProtKB-SubCell"/>
</dbReference>
<dbReference type="GO" id="GO:0000287">
    <property type="term" value="F:magnesium ion binding"/>
    <property type="evidence" value="ECO:0007669"/>
    <property type="project" value="InterPro"/>
</dbReference>
<dbReference type="GO" id="GO:0042803">
    <property type="term" value="F:protein homodimerization activity"/>
    <property type="evidence" value="ECO:0000250"/>
    <property type="project" value="UniProtKB"/>
</dbReference>
<dbReference type="GO" id="GO:0010333">
    <property type="term" value="F:terpene synthase activity"/>
    <property type="evidence" value="ECO:0007669"/>
    <property type="project" value="InterPro"/>
</dbReference>
<dbReference type="GO" id="GO:0016102">
    <property type="term" value="P:diterpenoid biosynthetic process"/>
    <property type="evidence" value="ECO:0007669"/>
    <property type="project" value="InterPro"/>
</dbReference>
<dbReference type="CDD" id="cd00684">
    <property type="entry name" value="Terpene_cyclase_plant_C1"/>
    <property type="match status" value="1"/>
</dbReference>
<dbReference type="FunFam" id="1.10.600.10:FF:000007">
    <property type="entry name" value="Isoprene synthase, chloroplastic"/>
    <property type="match status" value="1"/>
</dbReference>
<dbReference type="FunFam" id="1.50.10.130:FF:000001">
    <property type="entry name" value="Isoprene synthase, chloroplastic"/>
    <property type="match status" value="1"/>
</dbReference>
<dbReference type="Gene3D" id="1.10.600.10">
    <property type="entry name" value="Farnesyl Diphosphate Synthase"/>
    <property type="match status" value="1"/>
</dbReference>
<dbReference type="Gene3D" id="1.50.10.130">
    <property type="entry name" value="Terpene synthase, N-terminal domain"/>
    <property type="match status" value="1"/>
</dbReference>
<dbReference type="InterPro" id="IPR008949">
    <property type="entry name" value="Isoprenoid_synthase_dom_sf"/>
</dbReference>
<dbReference type="InterPro" id="IPR044814">
    <property type="entry name" value="Terpene_cyclase_plant_C1"/>
</dbReference>
<dbReference type="InterPro" id="IPR001906">
    <property type="entry name" value="Terpene_synth_N"/>
</dbReference>
<dbReference type="InterPro" id="IPR036965">
    <property type="entry name" value="Terpene_synth_N_sf"/>
</dbReference>
<dbReference type="InterPro" id="IPR050148">
    <property type="entry name" value="Terpene_synthase-like"/>
</dbReference>
<dbReference type="InterPro" id="IPR005630">
    <property type="entry name" value="Terpene_synthase_metal-bd"/>
</dbReference>
<dbReference type="InterPro" id="IPR008930">
    <property type="entry name" value="Terpenoid_cyclase/PrenylTrfase"/>
</dbReference>
<dbReference type="PANTHER" id="PTHR31225">
    <property type="entry name" value="OS04G0344100 PROTEIN-RELATED"/>
    <property type="match status" value="1"/>
</dbReference>
<dbReference type="PANTHER" id="PTHR31225:SF9">
    <property type="entry name" value="TERPENE SYNTHASE 10"/>
    <property type="match status" value="1"/>
</dbReference>
<dbReference type="Pfam" id="PF01397">
    <property type="entry name" value="Terpene_synth"/>
    <property type="match status" value="1"/>
</dbReference>
<dbReference type="Pfam" id="PF03936">
    <property type="entry name" value="Terpene_synth_C"/>
    <property type="match status" value="1"/>
</dbReference>
<dbReference type="SFLD" id="SFLDS00005">
    <property type="entry name" value="Isoprenoid_Synthase_Type_I"/>
    <property type="match status" value="1"/>
</dbReference>
<dbReference type="SFLD" id="SFLDG01604">
    <property type="entry name" value="Terpene_Cyclase_Like_1_C_Termi"/>
    <property type="match status" value="1"/>
</dbReference>
<dbReference type="SUPFAM" id="SSF48239">
    <property type="entry name" value="Terpenoid cyclases/Protein prenyltransferases"/>
    <property type="match status" value="1"/>
</dbReference>
<dbReference type="SUPFAM" id="SSF48576">
    <property type="entry name" value="Terpenoid synthases"/>
    <property type="match status" value="1"/>
</dbReference>
<comment type="function">
    <text evidence="6">Involved in the biosynthesis of phenolic monoterpenes natural products thymol and carvacrol which have a broad range of biological activities acting as antimicrobial compounds, insecticides, antioxidants and pharmaceutical agents (PubMed:23624978). Monoterpene synthase which catalyzes the conversion of geranyl diphosphate (GPP) to gamma-terpinene (PubMed:23624978).</text>
</comment>
<comment type="catalytic activity">
    <molecule>Gamma-terpinene synthase, chloroplastic</molecule>
    <reaction evidence="6">
        <text>(2E)-geranyl diphosphate = gamma-terpinene + diphosphate</text>
        <dbReference type="Rhea" id="RHEA:32559"/>
        <dbReference type="ChEBI" id="CHEBI:10577"/>
        <dbReference type="ChEBI" id="CHEBI:33019"/>
        <dbReference type="ChEBI" id="CHEBI:58057"/>
        <dbReference type="EC" id="4.2.3.114"/>
    </reaction>
    <physiologicalReaction direction="left-to-right" evidence="6">
        <dbReference type="Rhea" id="RHEA:32560"/>
    </physiologicalReaction>
</comment>
<comment type="cofactor">
    <cofactor evidence="3">
        <name>Mn(2+)</name>
        <dbReference type="ChEBI" id="CHEBI:29035"/>
    </cofactor>
    <cofactor evidence="3">
        <name>Mg(2+)</name>
        <dbReference type="ChEBI" id="CHEBI:18420"/>
    </cofactor>
    <text evidence="3">Binds 3 Mg(2+) or Mn(2+) ions per subunit.</text>
</comment>
<comment type="pathway">
    <text evidence="6">Secondary metabolite biosynthesis; terpenoid biosynthesis.</text>
</comment>
<comment type="subunit">
    <text evidence="1">Homodimer.</text>
</comment>
<comment type="subcellular location">
    <subcellularLocation>
        <location evidence="5">Plastid</location>
        <location evidence="5">Chloroplast</location>
    </subcellularLocation>
</comment>
<comment type="alternative products">
    <event type="alternative splicing"/>
    <isoform>
        <id>R4JGL8-1</id>
        <name>1</name>
        <sequence type="displayed"/>
    </isoform>
    <isoform>
        <id>R4JGL8-2</id>
        <name>2</name>
        <sequence type="described" ref="VSP_061122"/>
    </isoform>
</comment>
<comment type="domain">
    <text evidence="4">The Asp-Asp-Xaa-Xaa-Asp/Glu (DDXXD/E) motif is important for the catalytic activity, presumably through binding to Mg(2+).</text>
</comment>
<comment type="biotechnology">
    <text evidence="9 10 13 15">The monoterpenic phenol thymol is widely used as a fragrance and a flavoring ingredient in food and cosmetic industries (PubMed:29785774). Its derivatives have also several biological and pharmacological properties such as antimicrobial, antioxidant, anticarcinogenesis, anti-inflammatory and antispasmodic activities (PubMed:29785774, PubMed:29874939). Medical applications include the treatment of disorders affecting the respiratory, nervous, and cardiovascular systems (PubMed:29785774). It may also act as a growth enhancer and immunomodulator (PubMed:29785774). Thymol may also have antiviral activity toward COVID-19 by binding to the S1 receptor binding domain of the SARS-CoV-2 spike (S) glycoprotein (PubMed:32834111, PubMed:33855010).</text>
</comment>
<comment type="biotechnology">
    <text evidence="8 10 11 12 13 14 15">The monoterpenic phenol carvacrol is commonly used as a fragrance and a food flavoring ingredient and preservative (PubMed:24915411). Its derivatives exhibit also various biological and pharmacological properties including antioxidant, antibacterial, antifungal, insecticid, nematicid, anticancer, anti-inflammatory, hepatoprotective, spasmolytic, and vasorelaxant (PubMed:24915411, PubMed:29874939, PubMed:30836858, PubMed:33664752). Phytochemical inhibitor targeting the main SARS-CoV-2 viral protease (Mpro) and ACE2 in human host cells, carvacrol is a possible candidate for treating COVID-19 (PubMed:32448034, PubMed:33664752). Carvacrol may also have antiviral activity toward COVID-19 by binding to the S1 receptor binding domain of the SARS-CoV-2 spike (S) glycoprotein (PubMed:32834111, PubMed:33855010).</text>
</comment>
<comment type="similarity">
    <text evidence="16">Belongs to the terpene synthase family.</text>
</comment>
<proteinExistence type="evidence at protein level"/>
<accession>R4JGL8</accession>
<accession>R4JGM2</accession>
<accession>R4JHV6</accession>
<sequence length="597" mass="69288">MATLSMQVSILSKQVKNLNSFGMRASKLPMVARRVDVSTTRLRPICSASLQVEEETRRSGNYQASIWDNDFIQSFNTNKYRDEKHLNRKEELIAQVKVLLNTKMEAVKQLELIDDLRNLGLTYYFQDEFKKILTCIYNDHKCFKNEQVGDLYFTSLGFRLLRLHGFDVSEDVFSFFKNEDGSDFKASLGENTKDVLQLYEASFLVRVGEVTLEQARVFSTKILEKKVDEGINDEKLLAWIQHSLALPLHWRIQRLEARWFLDAYAARKDMNPLIFELGKIDFHIIQETQLEEVQEVSRWWTNSNLAEKLPFVRDRIVECYFWALGLFEPHEYGYQRKMAAIIITFVTIIDDVYDVYGTLDELQLFTDAIRKWDFESISTLPYYMQVCYLALYTYASELAYDILKDQGFNSISYLQRSWLSLVEGFFQEAKWYYAGYTPTLAEYLENAKVSISSPTIISQVYFTLPNSTERTVVENVYGYHNILYLSGMILRLADDLGTTQFELKRGDVQKAIQCYMKDNNATEKEGQEHVKYLLLEAWKEMNTAMADPDCPLSEDLVDAAANLGRASQFIYLEGDGHGVQHSEIHNQMGGLIFEPYV</sequence>
<feature type="transit peptide" description="Chloroplast" evidence="5">
    <location>
        <begin position="1"/>
        <end position="47"/>
    </location>
</feature>
<feature type="chain" id="PRO_0000453308" description="Gamma-terpinene synthase, chloroplastic">
    <location>
        <begin position="48"/>
        <end position="597"/>
    </location>
</feature>
<feature type="region of interest" description="Homodimerization" evidence="1">
    <location>
        <begin position="356"/>
        <end position="362"/>
    </location>
</feature>
<feature type="region of interest" description="Homodimerization" evidence="1">
    <location>
        <begin position="428"/>
        <end position="464"/>
    </location>
</feature>
<feature type="short sequence motif" description="DDXXD motif" evidence="4">
    <location>
        <begin position="350"/>
        <end position="354"/>
    </location>
</feature>
<feature type="binding site" evidence="2">
    <location>
        <position position="350"/>
    </location>
    <ligand>
        <name>Mn(2+)</name>
        <dbReference type="ChEBI" id="CHEBI:29035"/>
        <label>1</label>
    </ligand>
</feature>
<feature type="binding site" evidence="2">
    <location>
        <position position="350"/>
    </location>
    <ligand>
        <name>Mn(2+)</name>
        <dbReference type="ChEBI" id="CHEBI:29035"/>
        <label>2</label>
    </ligand>
</feature>
<feature type="binding site" evidence="2">
    <location>
        <position position="354"/>
    </location>
    <ligand>
        <name>Mn(2+)</name>
        <dbReference type="ChEBI" id="CHEBI:29035"/>
        <label>1</label>
    </ligand>
</feature>
<feature type="binding site" evidence="2">
    <location>
        <position position="354"/>
    </location>
    <ligand>
        <name>Mn(2+)</name>
        <dbReference type="ChEBI" id="CHEBI:29035"/>
        <label>2</label>
    </ligand>
</feature>
<feature type="binding site" evidence="2">
    <location>
        <position position="494"/>
    </location>
    <ligand>
        <name>Mn(2+)</name>
        <dbReference type="ChEBI" id="CHEBI:29035"/>
        <label>3</label>
    </ligand>
</feature>
<feature type="binding site" evidence="2">
    <location>
        <position position="502"/>
    </location>
    <ligand>
        <name>Mn(2+)</name>
        <dbReference type="ChEBI" id="CHEBI:29035"/>
        <label>3</label>
    </ligand>
</feature>
<feature type="splice variant" id="VSP_061122" description="In isoform 2.">
    <original>MATLSMQVSILSKQVKNLNSFGMRASKLPMVARRVDVSTTRLRPICS</original>
    <variation>M</variation>
    <location>
        <begin position="1"/>
        <end position="47"/>
    </location>
</feature>
<feature type="sequence conflict" description="In Ref. 1; AGK88258." evidence="16" ref="1">
    <original>Q</original>
    <variation>R</variation>
    <location>
        <position position="147"/>
    </location>
</feature>
<feature type="sequence conflict" description="In Ref. 1; AGK88258." evidence="16" ref="1">
    <original>H</original>
    <variation>Y</variation>
    <location>
        <position position="480"/>
    </location>
</feature>
<organism>
    <name type="scientific">Thymus caespititius</name>
    <name type="common">Cretan thyme</name>
    <name type="synonym">Origanum caespititium</name>
    <dbReference type="NCBI Taxonomy" id="751871"/>
    <lineage>
        <taxon>Eukaryota</taxon>
        <taxon>Viridiplantae</taxon>
        <taxon>Streptophyta</taxon>
        <taxon>Embryophyta</taxon>
        <taxon>Tracheophyta</taxon>
        <taxon>Spermatophyta</taxon>
        <taxon>Magnoliopsida</taxon>
        <taxon>eudicotyledons</taxon>
        <taxon>Gunneridae</taxon>
        <taxon>Pentapetalae</taxon>
        <taxon>asterids</taxon>
        <taxon>lamiids</taxon>
        <taxon>Lamiales</taxon>
        <taxon>Lamiaceae</taxon>
        <taxon>Nepetoideae</taxon>
        <taxon>Mentheae</taxon>
        <taxon>Thymus</taxon>
    </lineage>
</organism>
<gene>
    <name evidence="7" type="primary">TPS2</name>
</gene>